<keyword id="KW-0025">Alternative splicing</keyword>
<keyword id="KW-1262">Eukaryotic host gene expression shutoff by virus</keyword>
<keyword id="KW-1035">Host cytoplasm</keyword>
<keyword id="KW-1190">Host gene expression shutoff by virus</keyword>
<keyword id="KW-1192">Host mRNA suppression by virus</keyword>
<keyword id="KW-1048">Host nucleus</keyword>
<keyword id="KW-0945">Host-virus interaction</keyword>
<keyword id="KW-1090">Inhibition of host innate immune response by virus</keyword>
<keyword id="KW-1114">Inhibition of host interferon signaling pathway by virus</keyword>
<keyword id="KW-1102">Inhibition of host PKR by virus</keyword>
<keyword id="KW-1103">Inhibition of host pre-mRNA processing by virus</keyword>
<keyword id="KW-1088">Inhibition of host RIG-I by virus</keyword>
<keyword id="KW-1113">Inhibition of host RLR pathway by virus</keyword>
<keyword id="KW-0922">Interferon antiviral system evasion</keyword>
<keyword id="KW-0694">RNA-binding</keyword>
<keyword id="KW-0832">Ubl conjugation</keyword>
<keyword id="KW-0899">Viral immunoevasion</keyword>
<accession>P36349</accession>
<accession>Q0A2L0</accession>
<protein>
    <recommendedName>
        <fullName evidence="1">Non-structural protein 1</fullName>
        <shortName evidence="1">NS1</shortName>
    </recommendedName>
    <alternativeName>
        <fullName evidence="1">NS1A</fullName>
    </alternativeName>
</protein>
<gene>
    <name evidence="1" type="primary">NS</name>
</gene>
<dbReference type="EMBL" id="L37798">
    <property type="protein sequence ID" value="AAA56810.1"/>
    <property type="molecule type" value="Genomic_RNA"/>
</dbReference>
<dbReference type="EMBL" id="CY015056">
    <property type="protein sequence ID" value="ABI85071.1"/>
    <property type="molecule type" value="Genomic_RNA"/>
</dbReference>
<dbReference type="PIR" id="D45539">
    <property type="entry name" value="D45539"/>
</dbReference>
<dbReference type="SMR" id="P36349"/>
<dbReference type="Proteomes" id="UP000160986">
    <property type="component" value="Genome"/>
</dbReference>
<dbReference type="GO" id="GO:0030430">
    <property type="term" value="C:host cell cytoplasm"/>
    <property type="evidence" value="ECO:0007669"/>
    <property type="project" value="UniProtKB-SubCell"/>
</dbReference>
<dbReference type="GO" id="GO:0042025">
    <property type="term" value="C:host cell nucleus"/>
    <property type="evidence" value="ECO:0007669"/>
    <property type="project" value="UniProtKB-SubCell"/>
</dbReference>
<dbReference type="GO" id="GO:0030291">
    <property type="term" value="F:protein serine/threonine kinase inhibitor activity"/>
    <property type="evidence" value="ECO:0007669"/>
    <property type="project" value="UniProtKB-KW"/>
</dbReference>
<dbReference type="GO" id="GO:0003723">
    <property type="term" value="F:RNA binding"/>
    <property type="evidence" value="ECO:0007669"/>
    <property type="project" value="UniProtKB-KW"/>
</dbReference>
<dbReference type="GO" id="GO:0039540">
    <property type="term" value="P:symbiont-mediated suppression of host cytoplasmic pattern recognition receptor signaling pathway via inhibition of RIG-I activity"/>
    <property type="evidence" value="ECO:0007669"/>
    <property type="project" value="UniProtKB-KW"/>
</dbReference>
<dbReference type="GO" id="GO:0039657">
    <property type="term" value="P:symbiont-mediated suppression of host gene expression"/>
    <property type="evidence" value="ECO:0007669"/>
    <property type="project" value="UniProtKB-KW"/>
</dbReference>
<dbReference type="GO" id="GO:0039524">
    <property type="term" value="P:symbiont-mediated suppression of host mRNA processing"/>
    <property type="evidence" value="ECO:0007669"/>
    <property type="project" value="UniProtKB-KW"/>
</dbReference>
<dbReference type="GO" id="GO:0039580">
    <property type="term" value="P:symbiont-mediated suppression of host PKR/eIFalpha signaling"/>
    <property type="evidence" value="ECO:0007669"/>
    <property type="project" value="UniProtKB-KW"/>
</dbReference>
<dbReference type="GO" id="GO:0039502">
    <property type="term" value="P:symbiont-mediated suppression of host type I interferon-mediated signaling pathway"/>
    <property type="evidence" value="ECO:0007669"/>
    <property type="project" value="UniProtKB-KW"/>
</dbReference>
<dbReference type="FunFam" id="1.10.287.10:FF:000001">
    <property type="entry name" value="Non-structural protein 1"/>
    <property type="match status" value="1"/>
</dbReference>
<dbReference type="FunFam" id="3.30.420.330:FF:000001">
    <property type="entry name" value="Non-structural protein 1"/>
    <property type="match status" value="1"/>
</dbReference>
<dbReference type="Gene3D" id="3.30.420.330">
    <property type="entry name" value="Influenza virus non-structural protein, effector domain"/>
    <property type="match status" value="1"/>
</dbReference>
<dbReference type="Gene3D" id="1.10.287.10">
    <property type="entry name" value="S15/NS1, RNA-binding"/>
    <property type="match status" value="1"/>
</dbReference>
<dbReference type="HAMAP" id="MF_04066">
    <property type="entry name" value="INFV_NS1"/>
    <property type="match status" value="1"/>
</dbReference>
<dbReference type="InterPro" id="IPR004208">
    <property type="entry name" value="NS1"/>
</dbReference>
<dbReference type="InterPro" id="IPR000256">
    <property type="entry name" value="NS1A"/>
</dbReference>
<dbReference type="InterPro" id="IPR038064">
    <property type="entry name" value="NS1A_effect_dom-like_sf"/>
</dbReference>
<dbReference type="InterPro" id="IPR009068">
    <property type="entry name" value="uS15_NS1_RNA-bd_sf"/>
</dbReference>
<dbReference type="Pfam" id="PF00600">
    <property type="entry name" value="Flu_NS1"/>
    <property type="match status" value="1"/>
</dbReference>
<dbReference type="SUPFAM" id="SSF143021">
    <property type="entry name" value="Ns1 effector domain-like"/>
    <property type="match status" value="1"/>
</dbReference>
<dbReference type="SUPFAM" id="SSF47060">
    <property type="entry name" value="S15/NS1 RNA-binding domain"/>
    <property type="match status" value="1"/>
</dbReference>
<organismHost>
    <name type="scientific">Aves</name>
    <dbReference type="NCBI Taxonomy" id="8782"/>
</organismHost>
<organismHost>
    <name type="scientific">Equus caballus</name>
    <name type="common">Horse</name>
    <dbReference type="NCBI Taxonomy" id="9796"/>
</organismHost>
<organismHost>
    <name type="scientific">Homo sapiens</name>
    <name type="common">Human</name>
    <dbReference type="NCBI Taxonomy" id="9606"/>
</organismHost>
<organismHost>
    <name type="scientific">Phocidae</name>
    <name type="common">true seals</name>
    <dbReference type="NCBI Taxonomy" id="9709"/>
</organismHost>
<sequence>MDSNTVSSFQVDCFLWHVRKRFADQEMGDAPFLDRLRRDQKSLGGRGSTLGLDIETATRAGKQIVERILEEESDEALKMTIASAPASRYLTDMTLEEMSRDWFMLMPKQKVAGSLCIRMDQAIMDKNITLKANFSIIFDRLETLILLRAFTEEGAIVGEISPLPSLPGHTDEDVKNAIGVLIGGLEWNDNTVRVSETLQRFAWRSSNEDRRPPLPTKQKRKMARTIESEV</sequence>
<feature type="chain" id="PRO_0000078921" description="Non-structural protein 1">
    <location>
        <begin position="1"/>
        <end position="230"/>
    </location>
</feature>
<feature type="region of interest" description="RNA-binding and homodimerization" evidence="1">
    <location>
        <begin position="1"/>
        <end position="73"/>
    </location>
</feature>
<feature type="region of interest" description="CPSF4-binding" evidence="1">
    <location>
        <begin position="180"/>
        <end position="215"/>
    </location>
</feature>
<feature type="region of interest" description="Disordered" evidence="2">
    <location>
        <begin position="205"/>
        <end position="230"/>
    </location>
</feature>
<feature type="region of interest" description="PABPN1-binding" evidence="1">
    <location>
        <begin position="223"/>
        <end position="230"/>
    </location>
</feature>
<feature type="short sequence motif" description="Nuclear localization signal" evidence="1">
    <location>
        <begin position="34"/>
        <end position="38"/>
    </location>
</feature>
<feature type="short sequence motif" description="Nuclear export signal" evidence="1">
    <location>
        <begin position="137"/>
        <end position="146"/>
    </location>
</feature>
<feature type="sequence conflict" description="In Ref. 1; AAA56810." ref="1">
    <original>D</original>
    <variation>H</variation>
    <location>
        <position position="53"/>
    </location>
</feature>
<feature type="sequence conflict" description="In Ref. 1; AAA56810." ref="1">
    <original>R</original>
    <variation>P</variation>
    <location>
        <position position="67"/>
    </location>
</feature>
<feature type="sequence conflict" description="In Ref. 1; AAA56810." ref="1">
    <original>T</original>
    <variation>P</variation>
    <location>
        <position position="91"/>
    </location>
</feature>
<feature type="sequence conflict" description="In Ref. 1; AAA56810." ref="1">
    <original>V</original>
    <variation>D</variation>
    <location>
        <position position="194"/>
    </location>
</feature>
<name>NS1_I02A0</name>
<evidence type="ECO:0000255" key="1">
    <source>
        <dbReference type="HAMAP-Rule" id="MF_04066"/>
    </source>
</evidence>
<evidence type="ECO:0000256" key="2">
    <source>
        <dbReference type="SAM" id="MobiDB-lite"/>
    </source>
</evidence>
<organism>
    <name type="scientific">Influenza A virus (strain A/Chicken/Brescia/1902 H7N7)</name>
    <dbReference type="NCBI Taxonomy" id="36418"/>
    <lineage>
        <taxon>Viruses</taxon>
        <taxon>Riboviria</taxon>
        <taxon>Orthornavirae</taxon>
        <taxon>Negarnaviricota</taxon>
        <taxon>Polyploviricotina</taxon>
        <taxon>Insthoviricetes</taxon>
        <taxon>Articulavirales</taxon>
        <taxon>Orthomyxoviridae</taxon>
        <taxon>Alphainfluenzavirus</taxon>
        <taxon>Alphainfluenzavirus influenzae</taxon>
        <taxon>Influenza A virus</taxon>
    </lineage>
</organism>
<comment type="function">
    <text evidence="1">Inhibits post-transcriptional processing of cellular pre-mRNA, by binding and inhibiting two cellular proteins that are required for the 3'-end processing of cellular pre-mRNAs: the 30 kDa cleavage and polyadenylation specificity factor/CPSF4 and the poly(A)-binding protein 2/PABPN1. In turn, unprocessed 3' end pre-mRNAs accumulate in the host nucleus and are no longer exported to the cytoplasm. Cellular protein synthesis is thereby shut off very early after virus infection. Viral protein synthesis is not affected by the inhibition of the cellular 3' end processing machinery because the poly(A) tails of viral mRNAs are produced by the viral polymerase through a stuttering mechanism. Prevents the establishment of the cellular antiviral state by inhibiting TRIM25-mediated RIGI ubiquitination, which normally triggers the antiviral transduction signal that leads to the activation of type I IFN genes by transcription factors IRF3 and IRF7. Also binds poly(A) and U6 snRNA. Inhibits the integrated stress response (ISR) in the infected cell by blocking dsRNA binding by EIF2AK2/PKR and further phosphorylation of EIF2S1/EIF-2ALPHA. Stress granule formation is thus inhibited, which allows protein synthesis and viral replication.</text>
</comment>
<comment type="subunit">
    <text evidence="1">Homodimer. Interacts with host TRIM25 (via coiled coil); this interaction specifically inhibits TRIM25 multimerization and TRIM25-mediated RIGI CARD ubiquitination. Interacts with human EIF2AK2/PKR, CPSF4, IVNS1ABP and PABPN1.</text>
</comment>
<comment type="subcellular location">
    <subcellularLocation>
        <location evidence="1">Host nucleus</location>
    </subcellularLocation>
    <subcellularLocation>
        <location evidence="1">Host cytoplasm</location>
    </subcellularLocation>
    <text evidence="1">In uninfected, transfected cells, NS1 is localized in the nucleus. Only in virus infected cells, the nuclear export signal is unveiled, presumably by a viral protein, and a fraction of NS1 is exported in the cytoplasm.</text>
</comment>
<comment type="alternative products">
    <event type="alternative splicing"/>
    <isoform>
        <id>P36349-1</id>
        <name>NS1</name>
        <sequence type="displayed"/>
    </isoform>
    <isoform>
        <id>P36350-1</id>
        <name>NEP</name>
        <name>NS2</name>
        <sequence type="external"/>
    </isoform>
</comment>
<comment type="domain">
    <text evidence="1">The dsRNA-binding region is required for suppression of RNA silencing.</text>
</comment>
<comment type="PTM">
    <text evidence="1">Upon interferon induction, ISGylated via host HERC5; this results in the impairment of NS1 interaction with RNA targets due to its inability to form homodimers and to interact with host EIF2AK2/PKR.</text>
</comment>
<comment type="similarity">
    <text evidence="1">Belongs to the influenza A viruses NS1 family.</text>
</comment>
<reference key="1">
    <citation type="journal article" date="1992" name="Arch. Virol.">
        <title>Subtype H7 influenza viruses: comparative antigenic and molecular analysis of the HA-, M-, and NS-genes.</title>
        <authorList>
            <person name="Klimov A."/>
            <person name="Proesch S."/>
            <person name="Schaefer J."/>
            <person name="Bucher D."/>
        </authorList>
    </citation>
    <scope>NUCLEOTIDE SEQUENCE [GENOMIC RNA]</scope>
</reference>
<reference key="2">
    <citation type="journal article" date="2006" name="Science">
        <title>Large-scale sequence analysis of avian influenza isolates.</title>
        <authorList>
            <person name="Obenauer J.C."/>
            <person name="Denson J."/>
            <person name="Mehta P.K."/>
            <person name="Su X."/>
            <person name="Mukatira S."/>
            <person name="Finkelstein D.B."/>
            <person name="Xu X."/>
            <person name="Wang J."/>
            <person name="Ma J."/>
            <person name="Fan Y."/>
            <person name="Rakestraw K.M."/>
            <person name="Webster R.G."/>
            <person name="Hoffmann E."/>
            <person name="Krauss S."/>
            <person name="Zheng J."/>
            <person name="Zhang Z."/>
            <person name="Naeve C.W."/>
        </authorList>
    </citation>
    <scope>NUCLEOTIDE SEQUENCE [GENOMIC RNA]</scope>
</reference>
<reference key="3">
    <citation type="journal article" date="2003" name="Virology">
        <title>Intracellular warfare between human influenza viruses and human cells: the roles of the viral NS1 protein.</title>
        <authorList>
            <person name="Krug R.M."/>
            <person name="Yuan W."/>
            <person name="Noah D.L."/>
            <person name="Latham A.G."/>
        </authorList>
    </citation>
    <scope>REVIEW</scope>
</reference>
<proteinExistence type="inferred from homology"/>